<evidence type="ECO:0000255" key="1">
    <source>
        <dbReference type="HAMAP-Rule" id="MF_00369"/>
    </source>
</evidence>
<evidence type="ECO:0000305" key="2"/>
<proteinExistence type="inferred from homology"/>
<accession>Q8PU21</accession>
<comment type="similarity">
    <text evidence="1">Belongs to the eukaryotic ribosomal protein eL21 family.</text>
</comment>
<keyword id="KW-0687">Ribonucleoprotein</keyword>
<keyword id="KW-0689">Ribosomal protein</keyword>
<feature type="chain" id="PRO_0000149691" description="Large ribosomal subunit protein eL21">
    <location>
        <begin position="1"/>
        <end position="97"/>
    </location>
</feature>
<protein>
    <recommendedName>
        <fullName evidence="1">Large ribosomal subunit protein eL21</fullName>
    </recommendedName>
    <alternativeName>
        <fullName evidence="2">50S ribosomal protein L21e</fullName>
    </alternativeName>
</protein>
<dbReference type="EMBL" id="AE008384">
    <property type="protein sequence ID" value="AAM32232.1"/>
    <property type="molecule type" value="Genomic_DNA"/>
</dbReference>
<dbReference type="RefSeq" id="WP_011034452.1">
    <property type="nucleotide sequence ID" value="NC_003901.1"/>
</dbReference>
<dbReference type="SMR" id="Q8PU21"/>
<dbReference type="KEGG" id="mma:MM_2536"/>
<dbReference type="PATRIC" id="fig|192952.21.peg.2907"/>
<dbReference type="eggNOG" id="arCOG04129">
    <property type="taxonomic scope" value="Archaea"/>
</dbReference>
<dbReference type="HOGENOM" id="CLU_103610_1_1_2"/>
<dbReference type="Proteomes" id="UP000000595">
    <property type="component" value="Chromosome"/>
</dbReference>
<dbReference type="GO" id="GO:1990904">
    <property type="term" value="C:ribonucleoprotein complex"/>
    <property type="evidence" value="ECO:0007669"/>
    <property type="project" value="UniProtKB-KW"/>
</dbReference>
<dbReference type="GO" id="GO:0005840">
    <property type="term" value="C:ribosome"/>
    <property type="evidence" value="ECO:0007669"/>
    <property type="project" value="UniProtKB-KW"/>
</dbReference>
<dbReference type="GO" id="GO:0003735">
    <property type="term" value="F:structural constituent of ribosome"/>
    <property type="evidence" value="ECO:0007669"/>
    <property type="project" value="InterPro"/>
</dbReference>
<dbReference type="GO" id="GO:0006412">
    <property type="term" value="P:translation"/>
    <property type="evidence" value="ECO:0007669"/>
    <property type="project" value="UniProtKB-UniRule"/>
</dbReference>
<dbReference type="FunFam" id="2.30.30.70:FF:000001">
    <property type="entry name" value="60S ribosomal protein L21"/>
    <property type="match status" value="1"/>
</dbReference>
<dbReference type="Gene3D" id="2.30.30.70">
    <property type="entry name" value="Ribosomal protein L21"/>
    <property type="match status" value="1"/>
</dbReference>
<dbReference type="HAMAP" id="MF_00369">
    <property type="entry name" value="Ribosomal_eL21"/>
    <property type="match status" value="1"/>
</dbReference>
<dbReference type="InterPro" id="IPR001147">
    <property type="entry name" value="Ribosomal_eL21"/>
</dbReference>
<dbReference type="InterPro" id="IPR022856">
    <property type="entry name" value="Ribosomal_eL21_arc"/>
</dbReference>
<dbReference type="InterPro" id="IPR018259">
    <property type="entry name" value="Ribosomal_eL21_CS"/>
</dbReference>
<dbReference type="InterPro" id="IPR036948">
    <property type="entry name" value="Ribosomal_eL21_sf"/>
</dbReference>
<dbReference type="InterPro" id="IPR008991">
    <property type="entry name" value="Translation_prot_SH3-like_sf"/>
</dbReference>
<dbReference type="NCBIfam" id="NF003303">
    <property type="entry name" value="PRK04306.1"/>
    <property type="match status" value="1"/>
</dbReference>
<dbReference type="PANTHER" id="PTHR20981">
    <property type="entry name" value="60S RIBOSOMAL PROTEIN L21"/>
    <property type="match status" value="1"/>
</dbReference>
<dbReference type="Pfam" id="PF01157">
    <property type="entry name" value="Ribosomal_L21e"/>
    <property type="match status" value="1"/>
</dbReference>
<dbReference type="SUPFAM" id="SSF50104">
    <property type="entry name" value="Translation proteins SH3-like domain"/>
    <property type="match status" value="1"/>
</dbReference>
<dbReference type="PROSITE" id="PS01171">
    <property type="entry name" value="RIBOSOMAL_L21E"/>
    <property type="match status" value="1"/>
</dbReference>
<sequence>MTNSHGERRCTRYKLQKTVRERGISPVSKAIQEFEDGQMVHIDIDPSVQKGMPNPKFQGFTGKVIGQRGRSYILAVREGNSMKEVFSVPQHLKPQKY</sequence>
<gene>
    <name evidence="1" type="primary">rpl21e</name>
    <name type="ordered locus">MM_2536</name>
</gene>
<name>RL21_METMA</name>
<reference key="1">
    <citation type="journal article" date="2002" name="J. Mol. Microbiol. Biotechnol.">
        <title>The genome of Methanosarcina mazei: evidence for lateral gene transfer between Bacteria and Archaea.</title>
        <authorList>
            <person name="Deppenmeier U."/>
            <person name="Johann A."/>
            <person name="Hartsch T."/>
            <person name="Merkl R."/>
            <person name="Schmitz R.A."/>
            <person name="Martinez-Arias R."/>
            <person name="Henne A."/>
            <person name="Wiezer A."/>
            <person name="Baeumer S."/>
            <person name="Jacobi C."/>
            <person name="Brueggemann H."/>
            <person name="Lienard T."/>
            <person name="Christmann A."/>
            <person name="Boemecke M."/>
            <person name="Steckel S."/>
            <person name="Bhattacharyya A."/>
            <person name="Lykidis A."/>
            <person name="Overbeek R."/>
            <person name="Klenk H.-P."/>
            <person name="Gunsalus R.P."/>
            <person name="Fritz H.-J."/>
            <person name="Gottschalk G."/>
        </authorList>
    </citation>
    <scope>NUCLEOTIDE SEQUENCE [LARGE SCALE GENOMIC DNA]</scope>
    <source>
        <strain>ATCC BAA-159 / DSM 3647 / Goe1 / Go1 / JCM 11833 / OCM 88</strain>
    </source>
</reference>
<organism>
    <name type="scientific">Methanosarcina mazei (strain ATCC BAA-159 / DSM 3647 / Goe1 / Go1 / JCM 11833 / OCM 88)</name>
    <name type="common">Methanosarcina frisia</name>
    <dbReference type="NCBI Taxonomy" id="192952"/>
    <lineage>
        <taxon>Archaea</taxon>
        <taxon>Methanobacteriati</taxon>
        <taxon>Methanobacteriota</taxon>
        <taxon>Stenosarchaea group</taxon>
        <taxon>Methanomicrobia</taxon>
        <taxon>Methanosarcinales</taxon>
        <taxon>Methanosarcinaceae</taxon>
        <taxon>Methanosarcina</taxon>
    </lineage>
</organism>